<protein>
    <recommendedName>
        <fullName>Coiled-coil domain-containing protein 148</fullName>
    </recommendedName>
</protein>
<keyword id="KW-0175">Coiled coil</keyword>
<keyword id="KW-1185">Reference proteome</keyword>
<organism>
    <name type="scientific">Macaca fascicularis</name>
    <name type="common">Crab-eating macaque</name>
    <name type="synonym">Cynomolgus monkey</name>
    <dbReference type="NCBI Taxonomy" id="9541"/>
    <lineage>
        <taxon>Eukaryota</taxon>
        <taxon>Metazoa</taxon>
        <taxon>Chordata</taxon>
        <taxon>Craniata</taxon>
        <taxon>Vertebrata</taxon>
        <taxon>Euteleostomi</taxon>
        <taxon>Mammalia</taxon>
        <taxon>Eutheria</taxon>
        <taxon>Euarchontoglires</taxon>
        <taxon>Primates</taxon>
        <taxon>Haplorrhini</taxon>
        <taxon>Catarrhini</taxon>
        <taxon>Cercopithecidae</taxon>
        <taxon>Cercopithecinae</taxon>
        <taxon>Macaca</taxon>
    </lineage>
</organism>
<accession>Q8HZY8</accession>
<accession>Q9BGZ3</accession>
<name>CC148_MACFA</name>
<gene>
    <name type="primary">CCDC148</name>
    <name type="ORF">QflA-10778</name>
    <name type="ORF">QtsA-12190</name>
</gene>
<sequence>MEKMNQGDRPFMTIQRNDSSDHLVLHMKNEMRNTKYKPVDYQQLRVLTEAKKLASASAELKIRKAMLTSKISKEQTLIKQHKQVWWQEYQRLNEVRYKMESEIKSLLNEENIGNECLCDLTNFEQELSEQWCTYLKNVINPIQQLRADLKYRQHHTLQHSHPHVEFNSVKVLEEVDFVKKQLKTVFERLGLEQQRIENDLSGWSIKILDHSLEEKTNLLSELPIELGSLECPYPDLKSSIHSEFCKFTQKYQKKLQDVDLQLEDIYRNCQLSEEDHWIYQAILDQYPGDLFGRRTLYLDMLQRYFPHKSRHDLIEHEKYCDQYRFAMEQRKILISNWNKNKKDFTQKAVLTLIEACAAHEMESTLAKDKKKQQELCADLKAKVLQWRAHQEEVARLEMEISARRREKEEEKEKLWKKKELLQRAEKKKKIKKYWAMKKQKWQEMEMRDLQRLEELKKLMAEQSLKDRERVKYRKELLERRLMEKKEAALQEAHEDKERARRLEALRKQVAVVAQFDPVRMMSDTMASKARMGIEIEEEFILQKPLFTLNTYNEQQIISDPRLRFELALREAGLHRTLYAKEILPKISPRKPPRKDMESTVFKI</sequence>
<dbReference type="EMBL" id="AB055264">
    <property type="protein sequence ID" value="BAB21888.1"/>
    <property type="molecule type" value="mRNA"/>
</dbReference>
<dbReference type="EMBL" id="AB096994">
    <property type="protein sequence ID" value="BAC41241.1"/>
    <property type="molecule type" value="mRNA"/>
</dbReference>
<dbReference type="RefSeq" id="NP_001306308.1">
    <property type="nucleotide sequence ID" value="NM_001319379.1"/>
</dbReference>
<dbReference type="SMR" id="Q8HZY8"/>
<dbReference type="STRING" id="9541.ENSMFAP00000000419"/>
<dbReference type="eggNOG" id="ENOG502QV5F">
    <property type="taxonomic scope" value="Eukaryota"/>
</dbReference>
<dbReference type="Proteomes" id="UP000233100">
    <property type="component" value="Unplaced"/>
</dbReference>
<dbReference type="InterPro" id="IPR039902">
    <property type="entry name" value="CCDC148/CCDC112"/>
</dbReference>
<dbReference type="PANTHER" id="PTHR21549:SF1">
    <property type="entry name" value="COILED-COIL DOMAIN-CONTAINING PROTEIN 148"/>
    <property type="match status" value="1"/>
</dbReference>
<dbReference type="PANTHER" id="PTHR21549">
    <property type="entry name" value="MUTATED IN BLADDER CANCER 1"/>
    <property type="match status" value="1"/>
</dbReference>
<feature type="chain" id="PRO_0000326064" description="Coiled-coil domain-containing protein 148">
    <location>
        <begin position="1"/>
        <end position="603"/>
    </location>
</feature>
<feature type="coiled-coil region" evidence="1">
    <location>
        <begin position="365"/>
        <end position="429"/>
    </location>
</feature>
<feature type="coiled-coil region" evidence="1">
    <location>
        <begin position="461"/>
        <end position="510"/>
    </location>
</feature>
<feature type="sequence conflict" description="In Ref. 1; BAB21888." evidence="2" ref="1">
    <original>K</original>
    <variation>E</variation>
    <location>
        <position position="28"/>
    </location>
</feature>
<evidence type="ECO:0000255" key="1"/>
<evidence type="ECO:0000305" key="2"/>
<proteinExistence type="evidence at transcript level"/>
<reference key="1">
    <citation type="journal article" date="2002" name="BMC Genomics">
        <title>Cynomolgus monkey testicular cDNAs for discovery of novel human genes in the human genome sequence.</title>
        <authorList>
            <person name="Osada N."/>
            <person name="Hida M."/>
            <person name="Kusuda J."/>
            <person name="Tanuma R."/>
            <person name="Hirata M."/>
            <person name="Suto Y."/>
            <person name="Hirai M."/>
            <person name="Terao K."/>
            <person name="Sugano S."/>
            <person name="Hashimoto K."/>
        </authorList>
    </citation>
    <scope>NUCLEOTIDE SEQUENCE [LARGE SCALE MRNA]</scope>
    <source>
        <tissue>Frontal cortex</tissue>
    </source>
</reference>
<reference key="2">
    <citation type="submission" date="2002-11" db="EMBL/GenBank/DDBJ databases">
        <title>Isolation of novel full-length cDNA clones from macaque testis cDNA libraries.</title>
        <authorList>
            <person name="Hashimoto K."/>
            <person name="Osada N."/>
            <person name="Hida M."/>
            <person name="Kusuda J."/>
            <person name="Tanuma R."/>
            <person name="Hirai M."/>
            <person name="Terao K."/>
            <person name="Sugano S."/>
        </authorList>
    </citation>
    <scope>NUCLEOTIDE SEQUENCE [LARGE SCALE MRNA]</scope>
    <source>
        <tissue>Testis</tissue>
    </source>
</reference>